<name>HEM1_ECO27</name>
<dbReference type="EC" id="1.2.1.70" evidence="1"/>
<dbReference type="EMBL" id="FM180568">
    <property type="protein sequence ID" value="CAS08881.1"/>
    <property type="molecule type" value="Genomic_DNA"/>
</dbReference>
<dbReference type="RefSeq" id="WP_001339595.1">
    <property type="nucleotide sequence ID" value="NC_011601.1"/>
</dbReference>
<dbReference type="SMR" id="B7UQ98"/>
<dbReference type="KEGG" id="ecg:E2348C_1333"/>
<dbReference type="HOGENOM" id="CLU_035113_2_2_6"/>
<dbReference type="UniPathway" id="UPA00251">
    <property type="reaction ID" value="UER00316"/>
</dbReference>
<dbReference type="Proteomes" id="UP000008205">
    <property type="component" value="Chromosome"/>
</dbReference>
<dbReference type="GO" id="GO:0008883">
    <property type="term" value="F:glutamyl-tRNA reductase activity"/>
    <property type="evidence" value="ECO:0007669"/>
    <property type="project" value="UniProtKB-UniRule"/>
</dbReference>
<dbReference type="GO" id="GO:0050661">
    <property type="term" value="F:NADP binding"/>
    <property type="evidence" value="ECO:0007669"/>
    <property type="project" value="InterPro"/>
</dbReference>
<dbReference type="GO" id="GO:0019353">
    <property type="term" value="P:protoporphyrinogen IX biosynthetic process from glutamate"/>
    <property type="evidence" value="ECO:0007669"/>
    <property type="project" value="TreeGrafter"/>
</dbReference>
<dbReference type="CDD" id="cd05213">
    <property type="entry name" value="NAD_bind_Glutamyl_tRNA_reduct"/>
    <property type="match status" value="1"/>
</dbReference>
<dbReference type="FunFam" id="3.30.460.30:FF:000001">
    <property type="entry name" value="Glutamyl-tRNA reductase"/>
    <property type="match status" value="1"/>
</dbReference>
<dbReference type="FunFam" id="3.40.50.720:FF:000031">
    <property type="entry name" value="Glutamyl-tRNA reductase"/>
    <property type="match status" value="1"/>
</dbReference>
<dbReference type="Gene3D" id="3.30.460.30">
    <property type="entry name" value="Glutamyl-tRNA reductase, N-terminal domain"/>
    <property type="match status" value="1"/>
</dbReference>
<dbReference type="Gene3D" id="3.40.50.720">
    <property type="entry name" value="NAD(P)-binding Rossmann-like Domain"/>
    <property type="match status" value="1"/>
</dbReference>
<dbReference type="HAMAP" id="MF_00087">
    <property type="entry name" value="Glu_tRNA_reductase"/>
    <property type="match status" value="1"/>
</dbReference>
<dbReference type="InterPro" id="IPR000343">
    <property type="entry name" value="4pyrrol_synth_GluRdtase"/>
</dbReference>
<dbReference type="InterPro" id="IPR015896">
    <property type="entry name" value="4pyrrol_synth_GluRdtase_dimer"/>
</dbReference>
<dbReference type="InterPro" id="IPR015895">
    <property type="entry name" value="4pyrrol_synth_GluRdtase_N"/>
</dbReference>
<dbReference type="InterPro" id="IPR018214">
    <property type="entry name" value="GluRdtase_CS"/>
</dbReference>
<dbReference type="InterPro" id="IPR036453">
    <property type="entry name" value="GluRdtase_dimer_dom_sf"/>
</dbReference>
<dbReference type="InterPro" id="IPR036343">
    <property type="entry name" value="GluRdtase_N_sf"/>
</dbReference>
<dbReference type="InterPro" id="IPR036291">
    <property type="entry name" value="NAD(P)-bd_dom_sf"/>
</dbReference>
<dbReference type="InterPro" id="IPR006151">
    <property type="entry name" value="Shikm_DH/Glu-tRNA_Rdtase"/>
</dbReference>
<dbReference type="NCBIfam" id="TIGR01035">
    <property type="entry name" value="hemA"/>
    <property type="match status" value="1"/>
</dbReference>
<dbReference type="PANTHER" id="PTHR43013">
    <property type="entry name" value="GLUTAMYL-TRNA REDUCTASE"/>
    <property type="match status" value="1"/>
</dbReference>
<dbReference type="PANTHER" id="PTHR43013:SF1">
    <property type="entry name" value="GLUTAMYL-TRNA REDUCTASE"/>
    <property type="match status" value="1"/>
</dbReference>
<dbReference type="Pfam" id="PF00745">
    <property type="entry name" value="GlutR_dimer"/>
    <property type="match status" value="1"/>
</dbReference>
<dbReference type="Pfam" id="PF05201">
    <property type="entry name" value="GlutR_N"/>
    <property type="match status" value="1"/>
</dbReference>
<dbReference type="Pfam" id="PF01488">
    <property type="entry name" value="Shikimate_DH"/>
    <property type="match status" value="1"/>
</dbReference>
<dbReference type="PIRSF" id="PIRSF000445">
    <property type="entry name" value="4pyrrol_synth_GluRdtase"/>
    <property type="match status" value="1"/>
</dbReference>
<dbReference type="SUPFAM" id="SSF69742">
    <property type="entry name" value="Glutamyl tRNA-reductase catalytic, N-terminal domain"/>
    <property type="match status" value="1"/>
</dbReference>
<dbReference type="SUPFAM" id="SSF69075">
    <property type="entry name" value="Glutamyl tRNA-reductase dimerization domain"/>
    <property type="match status" value="1"/>
</dbReference>
<dbReference type="SUPFAM" id="SSF51735">
    <property type="entry name" value="NAD(P)-binding Rossmann-fold domains"/>
    <property type="match status" value="1"/>
</dbReference>
<dbReference type="PROSITE" id="PS00747">
    <property type="entry name" value="GLUTR"/>
    <property type="match status" value="1"/>
</dbReference>
<sequence>MTLLALGINHKTAPVSLRERVSFSPDKLDQALDSLLAQPMVQGGVVLSTCNRTELYLSVEERDDLQEALIRWLCDYHNLNEDDLRNSLYWHQDNDAVSHLMRVASGLDSLVLGEPQILGQVKKAFADSQKGHMKASELERMFQKSFSVAKRVRTETDIGASAVSVAFAACTLARQIFESLSTVTVLLVGAGETIELVARHLREHKVQKMIIANRTRERAQILADEVGAEVIALSDIDERLREADIIISSTASPLPIIGKGMVERALKSRRNQPMLLVDIAVPRDVEPEVGKLANAYLYSVDDLQSIISHNLAQRKAAAVEAETIVAQEASEFMAWLRAQSASETIRDYRSQAEHVRDELTAKALAALEQGGDAQAIMQDLAWKLTNRLIHAPTKSLQQAARDGDNERLNILRDSLGLE</sequence>
<feature type="chain" id="PRO_1000190523" description="Glutamyl-tRNA reductase">
    <location>
        <begin position="1"/>
        <end position="418"/>
    </location>
</feature>
<feature type="active site" description="Nucleophile" evidence="1">
    <location>
        <position position="50"/>
    </location>
</feature>
<feature type="binding site" evidence="1">
    <location>
        <begin position="49"/>
        <end position="52"/>
    </location>
    <ligand>
        <name>substrate</name>
    </ligand>
</feature>
<feature type="binding site" evidence="1">
    <location>
        <position position="109"/>
    </location>
    <ligand>
        <name>substrate</name>
    </ligand>
</feature>
<feature type="binding site" evidence="1">
    <location>
        <begin position="114"/>
        <end position="116"/>
    </location>
    <ligand>
        <name>substrate</name>
    </ligand>
</feature>
<feature type="binding site" evidence="1">
    <location>
        <position position="120"/>
    </location>
    <ligand>
        <name>substrate</name>
    </ligand>
</feature>
<feature type="binding site" evidence="1">
    <location>
        <begin position="189"/>
        <end position="194"/>
    </location>
    <ligand>
        <name>NADP(+)</name>
        <dbReference type="ChEBI" id="CHEBI:58349"/>
    </ligand>
</feature>
<feature type="site" description="Important for activity" evidence="1">
    <location>
        <position position="99"/>
    </location>
</feature>
<gene>
    <name evidence="1" type="primary">hemA</name>
    <name type="ordered locus">E2348C_1333</name>
</gene>
<accession>B7UQ98</accession>
<proteinExistence type="inferred from homology"/>
<comment type="function">
    <text evidence="1">Catalyzes the NADPH-dependent reduction of glutamyl-tRNA(Glu) to glutamate 1-semialdehyde (GSA).</text>
</comment>
<comment type="catalytic activity">
    <reaction evidence="1">
        <text>(S)-4-amino-5-oxopentanoate + tRNA(Glu) + NADP(+) = L-glutamyl-tRNA(Glu) + NADPH + H(+)</text>
        <dbReference type="Rhea" id="RHEA:12344"/>
        <dbReference type="Rhea" id="RHEA-COMP:9663"/>
        <dbReference type="Rhea" id="RHEA-COMP:9680"/>
        <dbReference type="ChEBI" id="CHEBI:15378"/>
        <dbReference type="ChEBI" id="CHEBI:57501"/>
        <dbReference type="ChEBI" id="CHEBI:57783"/>
        <dbReference type="ChEBI" id="CHEBI:58349"/>
        <dbReference type="ChEBI" id="CHEBI:78442"/>
        <dbReference type="ChEBI" id="CHEBI:78520"/>
        <dbReference type="EC" id="1.2.1.70"/>
    </reaction>
</comment>
<comment type="pathway">
    <text evidence="1">Porphyrin-containing compound metabolism; protoporphyrin-IX biosynthesis; 5-aminolevulinate from L-glutamyl-tRNA(Glu): step 1/2.</text>
</comment>
<comment type="subunit">
    <text evidence="1">Homodimer.</text>
</comment>
<comment type="domain">
    <text evidence="1">Possesses an unusual extended V-shaped dimeric structure with each monomer consisting of three distinct domains arranged along a curved 'spinal' alpha-helix. The N-terminal catalytic domain specifically recognizes the glutamate moiety of the substrate. The second domain is the NADPH-binding domain, and the third C-terminal domain is responsible for dimerization.</text>
</comment>
<comment type="miscellaneous">
    <text evidence="1">During catalysis, the active site Cys acts as a nucleophile attacking the alpha-carbonyl group of tRNA-bound glutamate with the formation of a thioester intermediate between enzyme and glutamate, and the concomitant release of tRNA(Glu). The thioester intermediate is finally reduced by direct hydride transfer from NADPH, to form the product GSA.</text>
</comment>
<comment type="similarity">
    <text evidence="1">Belongs to the glutamyl-tRNA reductase family.</text>
</comment>
<keyword id="KW-0521">NADP</keyword>
<keyword id="KW-0560">Oxidoreductase</keyword>
<keyword id="KW-0627">Porphyrin biosynthesis</keyword>
<keyword id="KW-1185">Reference proteome</keyword>
<organism>
    <name type="scientific">Escherichia coli O127:H6 (strain E2348/69 / EPEC)</name>
    <dbReference type="NCBI Taxonomy" id="574521"/>
    <lineage>
        <taxon>Bacteria</taxon>
        <taxon>Pseudomonadati</taxon>
        <taxon>Pseudomonadota</taxon>
        <taxon>Gammaproteobacteria</taxon>
        <taxon>Enterobacterales</taxon>
        <taxon>Enterobacteriaceae</taxon>
        <taxon>Escherichia</taxon>
    </lineage>
</organism>
<evidence type="ECO:0000255" key="1">
    <source>
        <dbReference type="HAMAP-Rule" id="MF_00087"/>
    </source>
</evidence>
<protein>
    <recommendedName>
        <fullName evidence="1">Glutamyl-tRNA reductase</fullName>
        <shortName evidence="1">GluTR</shortName>
        <ecNumber evidence="1">1.2.1.70</ecNumber>
    </recommendedName>
</protein>
<reference key="1">
    <citation type="journal article" date="2009" name="J. Bacteriol.">
        <title>Complete genome sequence and comparative genome analysis of enteropathogenic Escherichia coli O127:H6 strain E2348/69.</title>
        <authorList>
            <person name="Iguchi A."/>
            <person name="Thomson N.R."/>
            <person name="Ogura Y."/>
            <person name="Saunders D."/>
            <person name="Ooka T."/>
            <person name="Henderson I.R."/>
            <person name="Harris D."/>
            <person name="Asadulghani M."/>
            <person name="Kurokawa K."/>
            <person name="Dean P."/>
            <person name="Kenny B."/>
            <person name="Quail M.A."/>
            <person name="Thurston S."/>
            <person name="Dougan G."/>
            <person name="Hayashi T."/>
            <person name="Parkhill J."/>
            <person name="Frankel G."/>
        </authorList>
    </citation>
    <scope>NUCLEOTIDE SEQUENCE [LARGE SCALE GENOMIC DNA]</scope>
    <source>
        <strain>E2348/69 / EPEC</strain>
    </source>
</reference>